<gene>
    <name evidence="1" type="primary">hemF</name>
    <name type="ordered locus">PMM1582</name>
</gene>
<evidence type="ECO:0000255" key="1">
    <source>
        <dbReference type="HAMAP-Rule" id="MF_00333"/>
    </source>
</evidence>
<dbReference type="EC" id="1.3.3.3" evidence="1"/>
<dbReference type="EMBL" id="BX548174">
    <property type="protein sequence ID" value="CAE20041.1"/>
    <property type="molecule type" value="Genomic_DNA"/>
</dbReference>
<dbReference type="RefSeq" id="WP_011133210.1">
    <property type="nucleotide sequence ID" value="NC_005072.1"/>
</dbReference>
<dbReference type="SMR" id="Q7UZS3"/>
<dbReference type="STRING" id="59919.PMM1582"/>
<dbReference type="KEGG" id="pmm:PMM1582"/>
<dbReference type="eggNOG" id="COG0408">
    <property type="taxonomic scope" value="Bacteria"/>
</dbReference>
<dbReference type="HOGENOM" id="CLU_026169_0_1_3"/>
<dbReference type="OrthoDB" id="9777553at2"/>
<dbReference type="UniPathway" id="UPA00251">
    <property type="reaction ID" value="UER00322"/>
</dbReference>
<dbReference type="Proteomes" id="UP000001026">
    <property type="component" value="Chromosome"/>
</dbReference>
<dbReference type="GO" id="GO:0005737">
    <property type="term" value="C:cytoplasm"/>
    <property type="evidence" value="ECO:0007669"/>
    <property type="project" value="UniProtKB-SubCell"/>
</dbReference>
<dbReference type="GO" id="GO:0004109">
    <property type="term" value="F:coproporphyrinogen oxidase activity"/>
    <property type="evidence" value="ECO:0007669"/>
    <property type="project" value="UniProtKB-UniRule"/>
</dbReference>
<dbReference type="GO" id="GO:0046872">
    <property type="term" value="F:metal ion binding"/>
    <property type="evidence" value="ECO:0007669"/>
    <property type="project" value="UniProtKB-KW"/>
</dbReference>
<dbReference type="GO" id="GO:0042803">
    <property type="term" value="F:protein homodimerization activity"/>
    <property type="evidence" value="ECO:0000250"/>
    <property type="project" value="UniProtKB"/>
</dbReference>
<dbReference type="GO" id="GO:0015995">
    <property type="term" value="P:chlorophyll biosynthetic process"/>
    <property type="evidence" value="ECO:0007669"/>
    <property type="project" value="UniProtKB-UniRule"/>
</dbReference>
<dbReference type="GO" id="GO:0006782">
    <property type="term" value="P:protoporphyrinogen IX biosynthetic process"/>
    <property type="evidence" value="ECO:0007669"/>
    <property type="project" value="UniProtKB-UniRule"/>
</dbReference>
<dbReference type="FunFam" id="3.40.1500.10:FF:000007">
    <property type="entry name" value="Oxygen-dependent coproporphyrinogen-III oxidase"/>
    <property type="match status" value="1"/>
</dbReference>
<dbReference type="Gene3D" id="3.40.1500.10">
    <property type="entry name" value="Coproporphyrinogen III oxidase, aerobic"/>
    <property type="match status" value="1"/>
</dbReference>
<dbReference type="HAMAP" id="MF_00333">
    <property type="entry name" value="Coprogen_oxidas"/>
    <property type="match status" value="1"/>
</dbReference>
<dbReference type="InterPro" id="IPR001260">
    <property type="entry name" value="Coprogen_oxidase_aer"/>
</dbReference>
<dbReference type="InterPro" id="IPR036406">
    <property type="entry name" value="Coprogen_oxidase_aer_sf"/>
</dbReference>
<dbReference type="InterPro" id="IPR018375">
    <property type="entry name" value="Coprogen_oxidase_CS"/>
</dbReference>
<dbReference type="NCBIfam" id="NF003727">
    <property type="entry name" value="PRK05330.1"/>
    <property type="match status" value="1"/>
</dbReference>
<dbReference type="PANTHER" id="PTHR10755">
    <property type="entry name" value="COPROPORPHYRINOGEN III OXIDASE, MITOCHONDRIAL"/>
    <property type="match status" value="1"/>
</dbReference>
<dbReference type="PANTHER" id="PTHR10755:SF0">
    <property type="entry name" value="OXYGEN-DEPENDENT COPROPORPHYRINOGEN-III OXIDASE, MITOCHONDRIAL"/>
    <property type="match status" value="1"/>
</dbReference>
<dbReference type="Pfam" id="PF01218">
    <property type="entry name" value="Coprogen_oxidas"/>
    <property type="match status" value="1"/>
</dbReference>
<dbReference type="PIRSF" id="PIRSF000166">
    <property type="entry name" value="Coproporphyri_ox"/>
    <property type="match status" value="1"/>
</dbReference>
<dbReference type="PRINTS" id="PR00073">
    <property type="entry name" value="COPRGNOXDASE"/>
</dbReference>
<dbReference type="SUPFAM" id="SSF102886">
    <property type="entry name" value="Coproporphyrinogen III oxidase"/>
    <property type="match status" value="1"/>
</dbReference>
<dbReference type="PROSITE" id="PS01021">
    <property type="entry name" value="COPROGEN_OXIDASE"/>
    <property type="match status" value="1"/>
</dbReference>
<sequence>MSKEPPKNSREKTKNLLLKLQDNICKGLENIDGKAKFTEESWLREEGGGGKSRVLKNGSIFEQAGVNFSEVHGKELPQSIISQRPEAKGHKWFATGTSMVLHPKNPFIPTVHLNYRYFEAGPVWWFGGGADLTPYYPYLTDVRNFHKEHCNACEKVNKNLHKVFKPWCDEYFFLKHRNESRGIGGIFYDYQDGSGRIYKGNNKESKAYKESINIGELNLNWNNLFSLAENCGGAFLDSYQPIIEKRVNQNYTKEQREFQLYRRGRYVEFNLVWDRGTIFGLQTNGRTESILMSLPPLARWEYGYKAKKGSREDYLTKIFTKPQDWQNDKILEKFCKENNIFD</sequence>
<reference key="1">
    <citation type="journal article" date="2003" name="Nature">
        <title>Genome divergence in two Prochlorococcus ecotypes reflects oceanic niche differentiation.</title>
        <authorList>
            <person name="Rocap G."/>
            <person name="Larimer F.W."/>
            <person name="Lamerdin J.E."/>
            <person name="Malfatti S."/>
            <person name="Chain P."/>
            <person name="Ahlgren N.A."/>
            <person name="Arellano A."/>
            <person name="Coleman M."/>
            <person name="Hauser L."/>
            <person name="Hess W.R."/>
            <person name="Johnson Z.I."/>
            <person name="Land M.L."/>
            <person name="Lindell D."/>
            <person name="Post A.F."/>
            <person name="Regala W."/>
            <person name="Shah M."/>
            <person name="Shaw S.L."/>
            <person name="Steglich C."/>
            <person name="Sullivan M.B."/>
            <person name="Ting C.S."/>
            <person name="Tolonen A."/>
            <person name="Webb E.A."/>
            <person name="Zinser E.R."/>
            <person name="Chisholm S.W."/>
        </authorList>
    </citation>
    <scope>NUCLEOTIDE SEQUENCE [LARGE SCALE GENOMIC DNA]</scope>
    <source>
        <strain>CCMP1986 / NIES-2087 / MED4</strain>
    </source>
</reference>
<feature type="chain" id="PRO_0000109909" description="Oxygen-dependent coproporphyrinogen-III oxidase">
    <location>
        <begin position="1"/>
        <end position="342"/>
    </location>
</feature>
<feature type="region of interest" description="Important for dimerization" evidence="1">
    <location>
        <begin position="266"/>
        <end position="301"/>
    </location>
</feature>
<feature type="active site" description="Proton donor" evidence="1">
    <location>
        <position position="112"/>
    </location>
</feature>
<feature type="binding site" evidence="1">
    <location>
        <position position="98"/>
    </location>
    <ligand>
        <name>substrate</name>
    </ligand>
</feature>
<feature type="binding site" evidence="1">
    <location>
        <position position="102"/>
    </location>
    <ligand>
        <name>a divalent metal cation</name>
        <dbReference type="ChEBI" id="CHEBI:60240"/>
    </ligand>
</feature>
<feature type="binding site" evidence="1">
    <location>
        <position position="112"/>
    </location>
    <ligand>
        <name>a divalent metal cation</name>
        <dbReference type="ChEBI" id="CHEBI:60240"/>
    </ligand>
</feature>
<feature type="binding site" evidence="1">
    <location>
        <begin position="114"/>
        <end position="116"/>
    </location>
    <ligand>
        <name>substrate</name>
    </ligand>
</feature>
<feature type="binding site" evidence="1">
    <location>
        <position position="146"/>
    </location>
    <ligand>
        <name>a divalent metal cation</name>
        <dbReference type="ChEBI" id="CHEBI:60240"/>
    </ligand>
</feature>
<feature type="binding site" evidence="1">
    <location>
        <position position="176"/>
    </location>
    <ligand>
        <name>a divalent metal cation</name>
        <dbReference type="ChEBI" id="CHEBI:60240"/>
    </ligand>
</feature>
<feature type="site" description="Important for dimerization" evidence="1">
    <location>
        <position position="176"/>
    </location>
</feature>
<accession>Q7UZS3</accession>
<organism>
    <name type="scientific">Prochlorococcus marinus subsp. pastoris (strain CCMP1986 / NIES-2087 / MED4)</name>
    <dbReference type="NCBI Taxonomy" id="59919"/>
    <lineage>
        <taxon>Bacteria</taxon>
        <taxon>Bacillati</taxon>
        <taxon>Cyanobacteriota</taxon>
        <taxon>Cyanophyceae</taxon>
        <taxon>Synechococcales</taxon>
        <taxon>Prochlorococcaceae</taxon>
        <taxon>Prochlorococcus</taxon>
    </lineage>
</organism>
<comment type="function">
    <text evidence="1">Involved in the heme and chlorophyll biosynthesis. Catalyzes the aerobic oxidative decarboxylation of propionate groups of rings A and B of coproporphyrinogen-III to yield the vinyl groups in protoporphyrinogen-IX.</text>
</comment>
<comment type="catalytic activity">
    <reaction evidence="1">
        <text>coproporphyrinogen III + O2 + 2 H(+) = protoporphyrinogen IX + 2 CO2 + 2 H2O</text>
        <dbReference type="Rhea" id="RHEA:18257"/>
        <dbReference type="ChEBI" id="CHEBI:15377"/>
        <dbReference type="ChEBI" id="CHEBI:15378"/>
        <dbReference type="ChEBI" id="CHEBI:15379"/>
        <dbReference type="ChEBI" id="CHEBI:16526"/>
        <dbReference type="ChEBI" id="CHEBI:57307"/>
        <dbReference type="ChEBI" id="CHEBI:57309"/>
        <dbReference type="EC" id="1.3.3.3"/>
    </reaction>
</comment>
<comment type="cofactor">
    <cofactor evidence="1">
        <name>a divalent metal cation</name>
        <dbReference type="ChEBI" id="CHEBI:60240"/>
    </cofactor>
</comment>
<comment type="pathway">
    <text evidence="1">Porphyrin-containing compound metabolism; protoporphyrin-IX biosynthesis; protoporphyrinogen-IX from coproporphyrinogen-III (O2 route): step 1/1.</text>
</comment>
<comment type="subunit">
    <text evidence="1">Homodimer.</text>
</comment>
<comment type="subcellular location">
    <subcellularLocation>
        <location evidence="1">Cytoplasm</location>
    </subcellularLocation>
</comment>
<comment type="similarity">
    <text evidence="1">Belongs to the aerobic coproporphyrinogen-III oxidase family.</text>
</comment>
<protein>
    <recommendedName>
        <fullName evidence="1">Oxygen-dependent coproporphyrinogen-III oxidase</fullName>
        <shortName evidence="1">CPO</shortName>
        <shortName evidence="1">Coprogen oxidase</shortName>
        <shortName evidence="1">Coproporphyrinogenase</shortName>
        <ecNumber evidence="1">1.3.3.3</ecNumber>
    </recommendedName>
</protein>
<proteinExistence type="inferred from homology"/>
<keyword id="KW-0149">Chlorophyll biosynthesis</keyword>
<keyword id="KW-0963">Cytoplasm</keyword>
<keyword id="KW-0350">Heme biosynthesis</keyword>
<keyword id="KW-0479">Metal-binding</keyword>
<keyword id="KW-0560">Oxidoreductase</keyword>
<keyword id="KW-0627">Porphyrin biosynthesis</keyword>
<name>HEM6_PROMP</name>